<feature type="chain" id="PRO_0000133500" description="Major capsid protein L1">
    <location>
        <begin position="1"/>
        <end position="505"/>
    </location>
</feature>
<feature type="region of interest" description="Disordered" evidence="2">
    <location>
        <begin position="480"/>
        <end position="505"/>
    </location>
</feature>
<feature type="compositionally biased region" description="Low complexity" evidence="2">
    <location>
        <begin position="488"/>
        <end position="497"/>
    </location>
</feature>
<feature type="disulfide bond" description="Interchain (with C-428)" evidence="1 5">
    <location>
        <position position="175"/>
    </location>
</feature>
<feature type="disulfide bond" description="Interchain (with C-175)" evidence="1 5">
    <location>
        <position position="428"/>
    </location>
</feature>
<feature type="sequence conflict" description="In Ref. 1; AAA46943." evidence="11" ref="1">
    <original>D</original>
    <variation>H</variation>
    <location>
        <position position="202"/>
    </location>
</feature>
<feature type="sequence conflict" description="In Ref. 1; AAA46943." evidence="11" ref="1">
    <original>A</original>
    <variation>T</variation>
    <location>
        <position position="266"/>
    </location>
</feature>
<feature type="sequence conflict" description="In Ref. 1; AAA46943." evidence="11" ref="1">
    <location>
        <position position="423"/>
    </location>
</feature>
<feature type="sequence conflict" description="In Ref. 1; AAA46943." evidence="11" ref="1">
    <original>D</original>
    <variation>DD</variation>
    <location>
        <position position="439"/>
    </location>
</feature>
<feature type="helix" evidence="14">
    <location>
        <begin position="24"/>
        <end position="26"/>
    </location>
</feature>
<feature type="strand" evidence="14">
    <location>
        <begin position="28"/>
        <end position="38"/>
    </location>
</feature>
<feature type="strand" evidence="14">
    <location>
        <begin position="42"/>
        <end position="50"/>
    </location>
</feature>
<feature type="strand" evidence="13">
    <location>
        <begin position="55"/>
        <end position="57"/>
    </location>
</feature>
<feature type="strand" evidence="14">
    <location>
        <begin position="60"/>
        <end position="62"/>
    </location>
</feature>
<feature type="strand" evidence="14">
    <location>
        <begin position="71"/>
        <end position="76"/>
    </location>
</feature>
<feature type="helix" evidence="14">
    <location>
        <begin position="80"/>
        <end position="82"/>
    </location>
</feature>
<feature type="strand" evidence="14">
    <location>
        <begin position="86"/>
        <end position="88"/>
    </location>
</feature>
<feature type="turn" evidence="14">
    <location>
        <begin position="93"/>
        <end position="95"/>
    </location>
</feature>
<feature type="strand" evidence="14">
    <location>
        <begin position="96"/>
        <end position="109"/>
    </location>
</feature>
<feature type="strand" evidence="14">
    <location>
        <begin position="118"/>
        <end position="123"/>
    </location>
</feature>
<feature type="strand" evidence="13">
    <location>
        <begin position="128"/>
        <end position="131"/>
    </location>
</feature>
<feature type="strand" evidence="14">
    <location>
        <begin position="145"/>
        <end position="149"/>
    </location>
</feature>
<feature type="strand" evidence="14">
    <location>
        <begin position="153"/>
        <end position="162"/>
    </location>
</feature>
<feature type="strand" evidence="14">
    <location>
        <begin position="165"/>
        <end position="171"/>
    </location>
</feature>
<feature type="strand" evidence="12">
    <location>
        <begin position="176"/>
        <end position="178"/>
    </location>
</feature>
<feature type="strand" evidence="14">
    <location>
        <begin position="188"/>
        <end position="194"/>
    </location>
</feature>
<feature type="strand" evidence="13">
    <location>
        <begin position="203"/>
        <end position="205"/>
    </location>
</feature>
<feature type="strand" evidence="14">
    <location>
        <begin position="207"/>
        <end position="209"/>
    </location>
</feature>
<feature type="helix" evidence="14">
    <location>
        <begin position="210"/>
        <end position="213"/>
    </location>
</feature>
<feature type="helix" evidence="14">
    <location>
        <begin position="222"/>
        <end position="224"/>
    </location>
</feature>
<feature type="strand" evidence="14">
    <location>
        <begin position="225"/>
        <end position="232"/>
    </location>
</feature>
<feature type="helix" evidence="14">
    <location>
        <begin position="234"/>
        <end position="238"/>
    </location>
</feature>
<feature type="strand" evidence="14">
    <location>
        <begin position="247"/>
        <end position="261"/>
    </location>
</feature>
<feature type="strand" evidence="14">
    <location>
        <begin position="265"/>
        <end position="269"/>
    </location>
</feature>
<feature type="helix" evidence="12">
    <location>
        <begin position="273"/>
        <end position="275"/>
    </location>
</feature>
<feature type="helix" evidence="14">
    <location>
        <begin position="282"/>
        <end position="284"/>
    </location>
</feature>
<feature type="strand" evidence="14">
    <location>
        <begin position="292"/>
        <end position="296"/>
    </location>
</feature>
<feature type="strand" evidence="14">
    <location>
        <begin position="300"/>
        <end position="302"/>
    </location>
</feature>
<feature type="strand" evidence="14">
    <location>
        <begin position="307"/>
        <end position="312"/>
    </location>
</feature>
<feature type="strand" evidence="14">
    <location>
        <begin position="317"/>
        <end position="320"/>
    </location>
</feature>
<feature type="strand" evidence="14">
    <location>
        <begin position="322"/>
        <end position="324"/>
    </location>
</feature>
<feature type="strand" evidence="14">
    <location>
        <begin position="327"/>
        <end position="335"/>
    </location>
</feature>
<feature type="strand" evidence="14">
    <location>
        <begin position="342"/>
        <end position="348"/>
    </location>
</feature>
<feature type="helix" evidence="14">
    <location>
        <begin position="357"/>
        <end position="359"/>
    </location>
</feature>
<feature type="strand" evidence="14">
    <location>
        <begin position="360"/>
        <end position="382"/>
    </location>
</feature>
<feature type="helix" evidence="14">
    <location>
        <begin position="385"/>
        <end position="394"/>
    </location>
</feature>
<feature type="helix" evidence="14">
    <location>
        <begin position="396"/>
        <end position="402"/>
    </location>
</feature>
<feature type="strand" evidence="14">
    <location>
        <begin position="416"/>
        <end position="420"/>
    </location>
</feature>
<feature type="strand" evidence="14">
    <location>
        <begin position="423"/>
        <end position="427"/>
    </location>
</feature>
<feature type="strand" evidence="13">
    <location>
        <begin position="430"/>
        <end position="433"/>
    </location>
</feature>
<feature type="turn" evidence="14">
    <location>
        <begin position="440"/>
        <end position="443"/>
    </location>
</feature>
<feature type="strand" evidence="14">
    <location>
        <begin position="447"/>
        <end position="450"/>
    </location>
</feature>
<feature type="strand" evidence="14">
    <location>
        <begin position="455"/>
        <end position="457"/>
    </location>
</feature>
<feature type="helix" evidence="14">
    <location>
        <begin position="459"/>
        <end position="461"/>
    </location>
</feature>
<feature type="helix" evidence="14">
    <location>
        <begin position="463"/>
        <end position="472"/>
    </location>
</feature>
<feature type="strand" evidence="13">
    <location>
        <begin position="475"/>
        <end position="478"/>
    </location>
</feature>
<keyword id="KW-0002">3D-structure</keyword>
<keyword id="KW-0167">Capsid protein</keyword>
<keyword id="KW-1015">Disulfide bond</keyword>
<keyword id="KW-1048">Host nucleus</keyword>
<keyword id="KW-0945">Host-virus interaction</keyword>
<keyword id="KW-0426">Late protein</keyword>
<keyword id="KW-1185">Reference proteome</keyword>
<keyword id="KW-1145">T=7 icosahedral capsid protein</keyword>
<keyword id="KW-0832">Ubl conjugation</keyword>
<keyword id="KW-1161">Viral attachment to host cell</keyword>
<keyword id="KW-1162">Viral penetration into host cytoplasm</keyword>
<keyword id="KW-0946">Virion</keyword>
<keyword id="KW-1164">Virus endocytosis by host</keyword>
<keyword id="KW-1160">Virus entry into host cell</keyword>
<reference key="1">
    <citation type="journal article" date="1985" name="Virology">
        <title>Human papillomavirus type 16 DNA sequence.</title>
        <authorList>
            <person name="Seedorf K."/>
            <person name="Krammer G."/>
            <person name="Durst M."/>
            <person name="Suhai S."/>
            <person name="Rowekamp W.G."/>
        </authorList>
    </citation>
    <scope>NUCLEOTIDE SEQUENCE [GENOMIC DNA]</scope>
</reference>
<reference key="2">
    <citation type="journal article" date="1999" name="J. Gen. Virol.">
        <title>Nucleotide sequences and further characterization of human papillomavirus DNA present in the CaSki, SiHa and HeLa cervical carcinoma cell lines.</title>
        <authorList>
            <person name="Meissner J.D."/>
        </authorList>
    </citation>
    <scope>NUCLEOTIDE SEQUENCE [GENOMIC DNA]</scope>
</reference>
<reference key="3">
    <citation type="journal article" date="1999" name="Virology">
        <title>Establishment of the human papillomavirus type 16 (HPV-16) life cycle in an immortalized human foreskin keratinocyte cell line.</title>
        <authorList>
            <person name="Flores E.R."/>
            <person name="Allen-Hoffmann B.L."/>
            <person name="Lee D."/>
            <person name="Sattler C.A."/>
            <person name="Lambert P.F."/>
        </authorList>
    </citation>
    <scope>NUCLEOTIDE SEQUENCE [GENOMIC DNA]</scope>
</reference>
<reference key="4">
    <citation type="submission" date="2002-08" db="EMBL/GenBank/DDBJ databases">
        <title>Cloning and sequencing of non-European human papillomavirus (HPV) variant complete genomes from cervicovaginal cells by an overlapping PCR method.</title>
        <authorList>
            <person name="Terai M."/>
            <person name="Fu L."/>
            <person name="Ma Z."/>
            <person name="Burk R.D."/>
        </authorList>
    </citation>
    <scope>NUCLEOTIDE SEQUENCE [GENOMIC DNA]</scope>
    <source>
        <strain>Isolate European German 131</strain>
    </source>
</reference>
<reference key="5">
    <citation type="journal article" date="1992" name="J. Virol.">
        <title>Phylogenetic analysis of 48 papillomavirus types and 28 subtypes and variants: a showcase for the molecular evolution of DNA viruses.</title>
        <authorList>
            <person name="Chan S.-Y."/>
            <person name="Bernard H.U."/>
            <person name="Ong C.K."/>
            <person name="Chan S.P."/>
            <person name="Birgit H."/>
            <person name="Delius H."/>
        </authorList>
    </citation>
    <scope>NUCLEOTIDE SEQUENCE [GENOMIC DNA] OF 302-345</scope>
</reference>
<reference key="6">
    <citation type="journal article" date="1995" name="Virology">
        <title>Human papillomavirus type 16 capsid proteins produced from recombinant Semliki Forest virus assemble into virus-like particles.</title>
        <authorList>
            <person name="Heino P."/>
            <person name="Dillner J."/>
            <person name="Schwartz S."/>
        </authorList>
    </citation>
    <scope>FUNCTION</scope>
</reference>
<reference key="7">
    <citation type="journal article" date="2001" name="Biochem. Biophys. Res. Commun.">
        <title>alpha(6) Integrin is the main receptor of human papillomavirus type 16 VLP.</title>
        <authorList>
            <person name="Yoon C.S."/>
            <person name="Kim K.D."/>
            <person name="Park S.N."/>
            <person name="Cheong S.W."/>
        </authorList>
    </citation>
    <scope>INTERACTION WITH HOST ITGA6</scope>
</reference>
<reference key="8">
    <citation type="journal article" date="2002" name="J. Biol. Chem.">
        <title>Nuclear import strategies of high risk HPV16 L1 major capsid protein.</title>
        <authorList>
            <person name="Nelson L.M."/>
            <person name="Rose R.C."/>
            <person name="Moroianu J."/>
        </authorList>
    </citation>
    <scope>INTERACTION WITH HOST KPNA2</scope>
</reference>
<reference key="9">
    <citation type="journal article" date="2002" name="EMBO J.">
        <title>Atomic model of the papillomavirus capsid.</title>
        <authorList>
            <person name="Modis Y."/>
            <person name="Trus B.L."/>
            <person name="Harrison S.C."/>
        </authorList>
    </citation>
    <scope>DISULFIDE BOND</scope>
</reference>
<reference key="10">
    <citation type="journal article" date="2010" name="Mol. Cell">
        <title>The ISG15 conjugation system broadly targets newly synthesized proteins: implications for the antiviral function of ISG15.</title>
        <authorList>
            <person name="Durfee L.A."/>
            <person name="Lyon N."/>
            <person name="Seo K."/>
            <person name="Huibregtsesend J.M."/>
        </authorList>
    </citation>
    <scope>ISGYLATION</scope>
</reference>
<reference key="11">
    <citation type="journal article" date="1991" name="Virology">
        <title>Identification of the nuclear localization signal of human papillomavirus type 16 L1 protein.</title>
        <authorList>
            <person name="Zhou J."/>
            <person name="Doorbar J."/>
            <person name="Sun X.Y."/>
            <person name="Crawford L.V."/>
            <person name="McLean C.S."/>
            <person name="Frazer I.H."/>
        </authorList>
    </citation>
    <scope>NUCLEAR LOCALIZATION SIGNAL</scope>
</reference>
<reference key="12">
    <citation type="journal article" date="2003" name="J. Virol.">
        <title>Human papillomavirus types 16, 31, and 58 use different endocytosis pathways to enter cells.</title>
        <authorList>
            <person name="Bousarghin L."/>
            <person name="Touze A."/>
            <person name="Sizaret P.Y."/>
            <person name="Coursaget P."/>
        </authorList>
    </citation>
    <scope>FUNCTION</scope>
</reference>
<reference key="13">
    <citation type="journal article" date="2015" name="J. Gen. Virol.">
        <title>Interaction of human papillomavirus type 16 particles with heparan sulfate and syndecan-1 molecules in the keratinocyte extracellular matrix plays an active role in infection.</title>
        <authorList>
            <person name="Surviladze Z."/>
            <person name="Sterkand R.T."/>
            <person name="Ozbun M.A."/>
        </authorList>
    </citation>
    <scope>FUNCTION</scope>
    <scope>INTERACTION WITH HOST SDC1</scope>
</reference>
<reference key="14">
    <citation type="journal article" date="2015" name="J. Gen. Virol.">
        <title>The human papillomavirus type 16 L1 protein directly interacts with E2 and enhances E2-dependent replication and transcription activation.</title>
        <authorList>
            <person name="Siddiqa A."/>
            <person name="Leon K.C."/>
            <person name="James C.D."/>
            <person name="Bhatti M.F."/>
            <person name="Roberts S."/>
            <person name="Parish J.L."/>
        </authorList>
    </citation>
    <scope>INTERACTION WITH PROTEIN E2</scope>
</reference>
<reference key="15">
    <citation type="journal article" date="2005" name="Proteins">
        <title>Extent of protein-protein interactions and quasi-equivalence in viral capsids.</title>
        <authorList>
            <person name="Shepherd C.M."/>
            <person name="Reddy V.S."/>
        </authorList>
    </citation>
    <scope>X-RAY CRYSTALLOGRAPHY (3.5 ANGSTROMS) OF 1-505</scope>
</reference>
<comment type="function">
    <text evidence="1 6 9 10">Forms an icosahedral capsid with a T=7 symmetry and a 50 nm diameter. The capsid is composed of 72 pentamers linked to each other by disulfide bonds and associated with L2 proteins. Binds to heparan sulfate proteoglycans on cell surface of basal layer keratinocytes to provide initial virion attachment. This binding mediates a conformational change in the virus capsid that facilitates efficient infection. The virion enters the host cell via endocytosis. During virus trafficking, L1 protein dissociates from the viral DNA and the genomic DNA is released to the host nucleus. The virion assembly takes place within the cell nucleus. Encapsulates the genomic DNA together with protein L2.</text>
</comment>
<comment type="subunit">
    <text evidence="1 3 4 8 9">Self-assembles into homopentamers. The capsid has an icosahedral symmetry and consists of 72 capsomers, with each capsomer being a pentamer of L1. Interacts with the minor capsid protein L2; this interaction is necessary for viral genome encapsidation. Interacts with protein E2; this interaction enhances E2-dependent replication and transcription activation (PubMed:25911730). Interacts with host KPNA2; this interaction mediates the nuclear localization of L1 capsomers (PubMed:11971900). Interacts with host ITGA6 (PubMed:11341777). Interacts with host SDC1; this interaction promotes efficient infection of keratinocytes (PubMed:26289843).</text>
</comment>
<comment type="interaction">
    <interactant intactId="EBI-7362698">
        <id>P03101</id>
    </interactant>
    <interactant intactId="EBI-349938">
        <id>P52292</id>
        <label>KPNA2</label>
    </interactant>
    <organismsDiffer>true</organismsDiffer>
    <experiments>3</experiments>
</comment>
<comment type="interaction">
    <interactant intactId="EBI-7362698">
        <id>P03101</id>
    </interactant>
    <interactant intactId="EBI-286758">
        <id>Q14974</id>
        <label>KPNB1</label>
    </interactant>
    <organismsDiffer>true</organismsDiffer>
    <experiments>2</experiments>
</comment>
<comment type="subcellular location">
    <subcellularLocation>
        <location evidence="1">Virion</location>
    </subcellularLocation>
    <subcellularLocation>
        <location evidence="1">Host nucleus</location>
    </subcellularLocation>
</comment>
<comment type="PTM">
    <text evidence="7">ISGylated by host HERC5, this results in dominant-negative effect on virus infectivity.</text>
</comment>
<comment type="miscellaneous">
    <text>HPV16, in comparison to HPV types 6 and 11, is more often associated with malignant genital cancers in humans.</text>
</comment>
<comment type="similarity">
    <text evidence="1">Belongs to the papillomaviridae L1 protein family.</text>
</comment>
<comment type="online information" name="Virus Particle ExploreR db">
    <link uri="https://viperdb.org/Info_Page.php?VDB=1dzl"/>
    <text>Icosahedral capsid structure</text>
</comment>
<organismHost>
    <name type="scientific">Homo sapiens</name>
    <name type="common">Human</name>
    <dbReference type="NCBI Taxonomy" id="9606"/>
</organismHost>
<protein>
    <recommendedName>
        <fullName evidence="1">Major capsid protein L1</fullName>
    </recommendedName>
</protein>
<dbReference type="EMBL" id="K02718">
    <property type="protein sequence ID" value="AAA46943.1"/>
    <property type="molecule type" value="Genomic_DNA"/>
</dbReference>
<dbReference type="EMBL" id="AF001600">
    <property type="protein sequence ID" value="AAC31789.1"/>
    <property type="molecule type" value="Genomic_DNA"/>
</dbReference>
<dbReference type="EMBL" id="AF125673">
    <property type="protein sequence ID" value="AAD33259.1"/>
    <property type="molecule type" value="Genomic_DNA"/>
</dbReference>
<dbReference type="EMBL" id="AF536179">
    <property type="protein sequence ID" value="AAQ10719.1"/>
    <property type="molecule type" value="Genomic_DNA"/>
</dbReference>
<dbReference type="EMBL" id="M96285">
    <property type="protein sequence ID" value="AAA47024.1"/>
    <property type="molecule type" value="Genomic_DNA"/>
</dbReference>
<dbReference type="EMBL" id="A06331">
    <property type="protein sequence ID" value="CAA00546.1"/>
    <property type="molecule type" value="Unassigned_DNA"/>
</dbReference>
<dbReference type="PIR" id="A03640">
    <property type="entry name" value="P1WLHS"/>
</dbReference>
<dbReference type="PDB" id="1DZL">
    <property type="method" value="X-ray"/>
    <property type="resolution" value="3.50 A"/>
    <property type="chains" value="A=1-505"/>
</dbReference>
<dbReference type="PDB" id="3J6R">
    <property type="method" value="EM"/>
    <property type="resolution" value="9.10 A"/>
    <property type="chains" value="A/B/C/D/E/F=9-486"/>
</dbReference>
<dbReference type="PDB" id="3J7G">
    <property type="method" value="EM"/>
    <property type="resolution" value="13.60 A"/>
    <property type="chains" value="A/B/C/D/E=21-474"/>
</dbReference>
<dbReference type="PDB" id="3J8V">
    <property type="method" value="EM"/>
    <property type="resolution" value="13.90 A"/>
    <property type="chains" value="A/B/C/D/E=21-474"/>
</dbReference>
<dbReference type="PDB" id="3J8W">
    <property type="method" value="EM"/>
    <property type="resolution" value="13.00 A"/>
    <property type="chains" value="A/B/C/D/E=21-474"/>
</dbReference>
<dbReference type="PDB" id="3J8Z">
    <property type="method" value="EM"/>
    <property type="resolution" value="14.00 A"/>
    <property type="chains" value="A/B/C/D/E=21-474"/>
</dbReference>
<dbReference type="PDB" id="3JBA">
    <property type="method" value="EM"/>
    <property type="resolution" value="12.00 A"/>
    <property type="chains" value="A/B/C/D/E/F=9-486"/>
</dbReference>
<dbReference type="PDB" id="5KEP">
    <property type="method" value="EM"/>
    <property type="resolution" value="4.30 A"/>
    <property type="chains" value="A/B/C/D/E/F=3-485"/>
</dbReference>
<dbReference type="PDB" id="5KEQ">
    <property type="method" value="EM"/>
    <property type="resolution" value="4.30 A"/>
    <property type="chains" value="A/B/C/D/E/F=3-485"/>
</dbReference>
<dbReference type="PDB" id="6BSP">
    <property type="method" value="EM"/>
    <property type="resolution" value="4.70 A"/>
    <property type="chains" value="C/D/E/F/G/H=12-480"/>
</dbReference>
<dbReference type="PDB" id="6BT3">
    <property type="method" value="EM"/>
    <property type="resolution" value="4.70 A"/>
    <property type="chains" value="I/J/K/L/M/N=1-503"/>
</dbReference>
<dbReference type="PDB" id="7CN2">
    <property type="method" value="EM"/>
    <property type="resolution" value="3.43 A"/>
    <property type="chains" value="A/B/C/D/E/F=1-505"/>
</dbReference>
<dbReference type="PDB" id="7KZF">
    <property type="method" value="EM"/>
    <property type="resolution" value="3.10 A"/>
    <property type="chains" value="A/B/C/D/E/F=1-503"/>
</dbReference>
<dbReference type="PDB" id="8XES">
    <property type="method" value="X-ray"/>
    <property type="resolution" value="1.78 A"/>
    <property type="chains" value="C=386-394"/>
</dbReference>
<dbReference type="PDB" id="8XFZ">
    <property type="method" value="X-ray"/>
    <property type="resolution" value="2.32 A"/>
    <property type="chains" value="C=27-35"/>
</dbReference>
<dbReference type="PDBsum" id="1DZL"/>
<dbReference type="PDBsum" id="3J6R"/>
<dbReference type="PDBsum" id="3J7G"/>
<dbReference type="PDBsum" id="3J8V"/>
<dbReference type="PDBsum" id="3J8W"/>
<dbReference type="PDBsum" id="3J8Z"/>
<dbReference type="PDBsum" id="3JBA"/>
<dbReference type="PDBsum" id="5KEP"/>
<dbReference type="PDBsum" id="5KEQ"/>
<dbReference type="PDBsum" id="6BSP"/>
<dbReference type="PDBsum" id="6BT3"/>
<dbReference type="PDBsum" id="7CN2"/>
<dbReference type="PDBsum" id="7KZF"/>
<dbReference type="PDBsum" id="8XES"/>
<dbReference type="PDBsum" id="8XFZ"/>
<dbReference type="EMDB" id="EMD-23081"/>
<dbReference type="EMDB" id="EMD-30414"/>
<dbReference type="EMDB" id="EMD-7136"/>
<dbReference type="SMR" id="P03101"/>
<dbReference type="BioGRID" id="4263561">
    <property type="interactions" value="6"/>
</dbReference>
<dbReference type="IntAct" id="P03101">
    <property type="interactions" value="3"/>
</dbReference>
<dbReference type="MINT" id="P03101"/>
<dbReference type="BindingDB" id="P03101"/>
<dbReference type="ChEMBL" id="CHEMBL3562172"/>
<dbReference type="ABCD" id="P03101">
    <property type="antibodies" value="5 sequenced antibodies"/>
</dbReference>
<dbReference type="EvolutionaryTrace" id="P03101"/>
<dbReference type="Proteomes" id="UP000009251">
    <property type="component" value="Segment"/>
</dbReference>
<dbReference type="Proteomes" id="UP000106302">
    <property type="component" value="Genome"/>
</dbReference>
<dbReference type="Proteomes" id="UP000137623">
    <property type="component" value="Genome"/>
</dbReference>
<dbReference type="GO" id="GO:0042025">
    <property type="term" value="C:host cell nucleus"/>
    <property type="evidence" value="ECO:0007669"/>
    <property type="project" value="UniProtKB-SubCell"/>
</dbReference>
<dbReference type="GO" id="GO:0039620">
    <property type="term" value="C:T=7 icosahedral viral capsid"/>
    <property type="evidence" value="ECO:0000315"/>
    <property type="project" value="CACAO"/>
</dbReference>
<dbReference type="GO" id="GO:0005198">
    <property type="term" value="F:structural molecule activity"/>
    <property type="evidence" value="ECO:0007669"/>
    <property type="project" value="UniProtKB-UniRule"/>
</dbReference>
<dbReference type="GO" id="GO:0075509">
    <property type="term" value="P:endocytosis involved in viral entry into host cell"/>
    <property type="evidence" value="ECO:0007669"/>
    <property type="project" value="UniProtKB-KW"/>
</dbReference>
<dbReference type="GO" id="GO:0019062">
    <property type="term" value="P:virion attachment to host cell"/>
    <property type="evidence" value="ECO:0007669"/>
    <property type="project" value="UniProtKB-UniRule"/>
</dbReference>
<dbReference type="FunFam" id="2.60.175.20:FF:000001">
    <property type="entry name" value="Major capsid protein L1"/>
    <property type="match status" value="1"/>
</dbReference>
<dbReference type="Gene3D" id="2.60.175.20">
    <property type="entry name" value="Major capsid L1 (late) superfamily, Papillomavirus"/>
    <property type="match status" value="2"/>
</dbReference>
<dbReference type="HAMAP" id="MF_04002">
    <property type="entry name" value="PPV_L1"/>
    <property type="match status" value="1"/>
</dbReference>
<dbReference type="InterPro" id="IPR002210">
    <property type="entry name" value="Capsid_L1_Papillomavir"/>
</dbReference>
<dbReference type="InterPro" id="IPR036973">
    <property type="entry name" value="Capsid_L1_sf_Papillomavir"/>
</dbReference>
<dbReference type="InterPro" id="IPR011222">
    <property type="entry name" value="dsDNA_vir_gr_I_capsid"/>
</dbReference>
<dbReference type="Pfam" id="PF00500">
    <property type="entry name" value="Late_protein_L1"/>
    <property type="match status" value="1"/>
</dbReference>
<dbReference type="PRINTS" id="PR00865">
    <property type="entry name" value="HPVCAPSIDL1"/>
</dbReference>
<dbReference type="SUPFAM" id="SSF88648">
    <property type="entry name" value="Group I dsDNA viruses"/>
    <property type="match status" value="1"/>
</dbReference>
<organism>
    <name type="scientific">Human papillomavirus type 16</name>
    <dbReference type="NCBI Taxonomy" id="333760"/>
    <lineage>
        <taxon>Viruses</taxon>
        <taxon>Monodnaviria</taxon>
        <taxon>Shotokuvirae</taxon>
        <taxon>Cossaviricota</taxon>
        <taxon>Papovaviricetes</taxon>
        <taxon>Zurhausenvirales</taxon>
        <taxon>Papillomaviridae</taxon>
        <taxon>Firstpapillomavirinae</taxon>
        <taxon>Alphapapillomavirus</taxon>
        <taxon>Alphapapillomavirus 9</taxon>
    </lineage>
</organism>
<proteinExistence type="evidence at protein level"/>
<evidence type="ECO:0000255" key="1">
    <source>
        <dbReference type="HAMAP-Rule" id="MF_04002"/>
    </source>
</evidence>
<evidence type="ECO:0000256" key="2">
    <source>
        <dbReference type="SAM" id="MobiDB-lite"/>
    </source>
</evidence>
<evidence type="ECO:0000269" key="3">
    <source>
    </source>
</evidence>
<evidence type="ECO:0000269" key="4">
    <source>
    </source>
</evidence>
<evidence type="ECO:0000269" key="5">
    <source>
    </source>
</evidence>
<evidence type="ECO:0000269" key="6">
    <source>
    </source>
</evidence>
<evidence type="ECO:0000269" key="7">
    <source>
    </source>
</evidence>
<evidence type="ECO:0000269" key="8">
    <source>
    </source>
</evidence>
<evidence type="ECO:0000269" key="9">
    <source>
    </source>
</evidence>
<evidence type="ECO:0000269" key="10">
    <source>
    </source>
</evidence>
<evidence type="ECO:0000305" key="11"/>
<evidence type="ECO:0007829" key="12">
    <source>
        <dbReference type="PDB" id="1DZL"/>
    </source>
</evidence>
<evidence type="ECO:0007829" key="13">
    <source>
        <dbReference type="PDB" id="7CN2"/>
    </source>
</evidence>
<evidence type="ECO:0007829" key="14">
    <source>
        <dbReference type="PDB" id="7KZF"/>
    </source>
</evidence>
<gene>
    <name evidence="1" type="primary">L1</name>
</gene>
<name>VL1_HPV16</name>
<accession>P03101</accession>
<accession>O00530</accession>
<sequence>MSLWLPSEATVYLPPVPVSKVVSTDEYVARTNIYYHAGTSRLLAVGHPYFPIKKPNNNKILVPKVSGLQYRVFRIHLPDPNKFGFPDTSFYNPDTQRLVWACVGVEVGRGQPLGVGISGHPLLNKLDDTENASAYAANAGVDNRECISMDYKQTQLCLIGCKPPIGEHWGKGSPCTNVAVNPGDCPPLELINTVIQDGDMVDTGFGAMDFTTLQANKSEVPLDICTSICKYPDYIKMVSEPYGDSLFFYLRREQMFVRHLFNRAGAVGENVPDDLYIKGSGSTANLASSNYFPTPSGSMVTSDAQIFNKPYWLQRAQGHNNGICWGNQLFVTVVDTTRSTNMSLCAAISTSETTYKNTNFKEYLRHGEEYDLQFIFQLCKITLTADVMTYIHSMNSTILEDWNFGLQPPPGGTLEDTYRFVTSQAIACQKHTPPAPKEDPLKKYTFWEVNLKEKFSADLDQFPLGRKFLLQAGLKAKPKFTLGKRKATPTTSSTSTTAKRKKRKL</sequence>